<dbReference type="EC" id="1.14.-.-"/>
<dbReference type="EMBL" id="AE014297">
    <property type="protein sequence ID" value="AAF55065.2"/>
    <property type="molecule type" value="Genomic_DNA"/>
</dbReference>
<dbReference type="RefSeq" id="NP_650368.1">
    <property type="nucleotide sequence ID" value="NM_142111.2"/>
</dbReference>
<dbReference type="SMR" id="Q9VFJ0"/>
<dbReference type="FunCoup" id="Q9VFJ0">
    <property type="interactions" value="1"/>
</dbReference>
<dbReference type="IntAct" id="Q9VFJ0">
    <property type="interactions" value="1"/>
</dbReference>
<dbReference type="STRING" id="7227.FBpp0082413"/>
<dbReference type="PaxDb" id="7227-FBpp0082413"/>
<dbReference type="DNASU" id="41759"/>
<dbReference type="EnsemblMetazoa" id="FBtr0082954">
    <property type="protein sequence ID" value="FBpp0082413"/>
    <property type="gene ID" value="FBgn0038236"/>
</dbReference>
<dbReference type="GeneID" id="41759"/>
<dbReference type="KEGG" id="dme:Dmel_CG3360"/>
<dbReference type="UCSC" id="CG3360-RA">
    <property type="organism name" value="d. melanogaster"/>
</dbReference>
<dbReference type="AGR" id="FB:FBgn0038236"/>
<dbReference type="CTD" id="41759"/>
<dbReference type="FlyBase" id="FBgn0038236">
    <property type="gene designation" value="Cyp313a1"/>
</dbReference>
<dbReference type="VEuPathDB" id="VectorBase:FBgn0038236"/>
<dbReference type="eggNOG" id="KOG0157">
    <property type="taxonomic scope" value="Eukaryota"/>
</dbReference>
<dbReference type="GeneTree" id="ENSGT00940000167150"/>
<dbReference type="HOGENOM" id="CLU_001570_5_1_1"/>
<dbReference type="InParanoid" id="Q9VFJ0"/>
<dbReference type="OMA" id="MFHTHRN"/>
<dbReference type="OrthoDB" id="1470350at2759"/>
<dbReference type="PhylomeDB" id="Q9VFJ0"/>
<dbReference type="BioGRID-ORCS" id="41759">
    <property type="hits" value="0 hits in 1 CRISPR screen"/>
</dbReference>
<dbReference type="GenomeRNAi" id="41759"/>
<dbReference type="PRO" id="PR:Q9VFJ0"/>
<dbReference type="Proteomes" id="UP000000803">
    <property type="component" value="Chromosome 3R"/>
</dbReference>
<dbReference type="Bgee" id="FBgn0038236">
    <property type="expression patterns" value="Expressed in head capsule and 90 other cell types or tissues"/>
</dbReference>
<dbReference type="ExpressionAtlas" id="Q9VFJ0">
    <property type="expression patterns" value="baseline and differential"/>
</dbReference>
<dbReference type="GO" id="GO:0005789">
    <property type="term" value="C:endoplasmic reticulum membrane"/>
    <property type="evidence" value="ECO:0007669"/>
    <property type="project" value="UniProtKB-SubCell"/>
</dbReference>
<dbReference type="GO" id="GO:0020037">
    <property type="term" value="F:heme binding"/>
    <property type="evidence" value="ECO:0007669"/>
    <property type="project" value="InterPro"/>
</dbReference>
<dbReference type="GO" id="GO:0005506">
    <property type="term" value="F:iron ion binding"/>
    <property type="evidence" value="ECO:0007669"/>
    <property type="project" value="InterPro"/>
</dbReference>
<dbReference type="GO" id="GO:0004497">
    <property type="term" value="F:monooxygenase activity"/>
    <property type="evidence" value="ECO:0007669"/>
    <property type="project" value="UniProtKB-KW"/>
</dbReference>
<dbReference type="GO" id="GO:0016705">
    <property type="term" value="F:oxidoreductase activity, acting on paired donors, with incorporation or reduction of molecular oxygen"/>
    <property type="evidence" value="ECO:0007669"/>
    <property type="project" value="InterPro"/>
</dbReference>
<dbReference type="CDD" id="cd11057">
    <property type="entry name" value="CYP313-like"/>
    <property type="match status" value="1"/>
</dbReference>
<dbReference type="Gene3D" id="1.10.630.10">
    <property type="entry name" value="Cytochrome P450"/>
    <property type="match status" value="1"/>
</dbReference>
<dbReference type="InterPro" id="IPR001128">
    <property type="entry name" value="Cyt_P450"/>
</dbReference>
<dbReference type="InterPro" id="IPR002401">
    <property type="entry name" value="Cyt_P450_E_grp-I"/>
</dbReference>
<dbReference type="InterPro" id="IPR036396">
    <property type="entry name" value="Cyt_P450_sf"/>
</dbReference>
<dbReference type="InterPro" id="IPR050196">
    <property type="entry name" value="Cytochrome_P450_Monoox"/>
</dbReference>
<dbReference type="PANTHER" id="PTHR24291:SF50">
    <property type="entry name" value="BIFUNCTIONAL ALBAFLAVENONE MONOOXYGENASE_TERPENE SYNTHASE"/>
    <property type="match status" value="1"/>
</dbReference>
<dbReference type="PANTHER" id="PTHR24291">
    <property type="entry name" value="CYTOCHROME P450 FAMILY 4"/>
    <property type="match status" value="1"/>
</dbReference>
<dbReference type="Pfam" id="PF00067">
    <property type="entry name" value="p450"/>
    <property type="match status" value="1"/>
</dbReference>
<dbReference type="PRINTS" id="PR00463">
    <property type="entry name" value="EP450I"/>
</dbReference>
<dbReference type="PRINTS" id="PR00385">
    <property type="entry name" value="P450"/>
</dbReference>
<dbReference type="SUPFAM" id="SSF48264">
    <property type="entry name" value="Cytochrome P450"/>
    <property type="match status" value="1"/>
</dbReference>
<evidence type="ECO:0000250" key="1"/>
<evidence type="ECO:0000305" key="2"/>
<proteinExistence type="inferred from homology"/>
<gene>
    <name type="primary">Cyp313a1</name>
    <name type="ORF">CG3360</name>
</gene>
<sequence length="492" mass="56534">MLTINLLLAVGALFWIYFLWSRRRLYFLMLKIPGPIGLPILGSSLENIITYKRKLSFRTKYLNKYGSTILTWMGPVPFIVTRDPKVVEDIFSSPDCHNKSQHIVNAITSCMGNGLLGKQDPHWLDRRKHFNPSFKQDLLLSFFHIFDAETKVLMNLLDTYVDKGEIDVVPEMLRWSFKIAAQTTMGSEVKHDEHFKNGSLVESFESLISHSTLNILMPLVQNRMISKICGYDKLRADNFSRIQKMLDNVVNKKVNPLPKTDSDPESNIVINRAMELYRKGDITYMDVKSECCIMIAAGYDTSALTVYHALFLLANHPEHQEAVFEELNGVFPDAGHFGITYPDMQKLDYLERVIKETLRLIPAIPITARETKNDVRLSNGVLIPKGVVIGIDMFHTHRNPEVWGPDADNFNPDNFLAENMEQKHPYAYIPFARGKRNCIGSKYAMMSSKFALCRILRNYKISTSTLYKDLVYVDNMTMKLAEYPRLKLQRRG</sequence>
<name>CA131_DROME</name>
<reference key="1">
    <citation type="journal article" date="2000" name="Science">
        <title>The genome sequence of Drosophila melanogaster.</title>
        <authorList>
            <person name="Adams M.D."/>
            <person name="Celniker S.E."/>
            <person name="Holt R.A."/>
            <person name="Evans C.A."/>
            <person name="Gocayne J.D."/>
            <person name="Amanatides P.G."/>
            <person name="Scherer S.E."/>
            <person name="Li P.W."/>
            <person name="Hoskins R.A."/>
            <person name="Galle R.F."/>
            <person name="George R.A."/>
            <person name="Lewis S.E."/>
            <person name="Richards S."/>
            <person name="Ashburner M."/>
            <person name="Henderson S.N."/>
            <person name="Sutton G.G."/>
            <person name="Wortman J.R."/>
            <person name="Yandell M.D."/>
            <person name="Zhang Q."/>
            <person name="Chen L.X."/>
            <person name="Brandon R.C."/>
            <person name="Rogers Y.-H.C."/>
            <person name="Blazej R.G."/>
            <person name="Champe M."/>
            <person name="Pfeiffer B.D."/>
            <person name="Wan K.H."/>
            <person name="Doyle C."/>
            <person name="Baxter E.G."/>
            <person name="Helt G."/>
            <person name="Nelson C.R."/>
            <person name="Miklos G.L.G."/>
            <person name="Abril J.F."/>
            <person name="Agbayani A."/>
            <person name="An H.-J."/>
            <person name="Andrews-Pfannkoch C."/>
            <person name="Baldwin D."/>
            <person name="Ballew R.M."/>
            <person name="Basu A."/>
            <person name="Baxendale J."/>
            <person name="Bayraktaroglu L."/>
            <person name="Beasley E.M."/>
            <person name="Beeson K.Y."/>
            <person name="Benos P.V."/>
            <person name="Berman B.P."/>
            <person name="Bhandari D."/>
            <person name="Bolshakov S."/>
            <person name="Borkova D."/>
            <person name="Botchan M.R."/>
            <person name="Bouck J."/>
            <person name="Brokstein P."/>
            <person name="Brottier P."/>
            <person name="Burtis K.C."/>
            <person name="Busam D.A."/>
            <person name="Butler H."/>
            <person name="Cadieu E."/>
            <person name="Center A."/>
            <person name="Chandra I."/>
            <person name="Cherry J.M."/>
            <person name="Cawley S."/>
            <person name="Dahlke C."/>
            <person name="Davenport L.B."/>
            <person name="Davies P."/>
            <person name="de Pablos B."/>
            <person name="Delcher A."/>
            <person name="Deng Z."/>
            <person name="Mays A.D."/>
            <person name="Dew I."/>
            <person name="Dietz S.M."/>
            <person name="Dodson K."/>
            <person name="Doup L.E."/>
            <person name="Downes M."/>
            <person name="Dugan-Rocha S."/>
            <person name="Dunkov B.C."/>
            <person name="Dunn P."/>
            <person name="Durbin K.J."/>
            <person name="Evangelista C.C."/>
            <person name="Ferraz C."/>
            <person name="Ferriera S."/>
            <person name="Fleischmann W."/>
            <person name="Fosler C."/>
            <person name="Gabrielian A.E."/>
            <person name="Garg N.S."/>
            <person name="Gelbart W.M."/>
            <person name="Glasser K."/>
            <person name="Glodek A."/>
            <person name="Gong F."/>
            <person name="Gorrell J.H."/>
            <person name="Gu Z."/>
            <person name="Guan P."/>
            <person name="Harris M."/>
            <person name="Harris N.L."/>
            <person name="Harvey D.A."/>
            <person name="Heiman T.J."/>
            <person name="Hernandez J.R."/>
            <person name="Houck J."/>
            <person name="Hostin D."/>
            <person name="Houston K.A."/>
            <person name="Howland T.J."/>
            <person name="Wei M.-H."/>
            <person name="Ibegwam C."/>
            <person name="Jalali M."/>
            <person name="Kalush F."/>
            <person name="Karpen G.H."/>
            <person name="Ke Z."/>
            <person name="Kennison J.A."/>
            <person name="Ketchum K.A."/>
            <person name="Kimmel B.E."/>
            <person name="Kodira C.D."/>
            <person name="Kraft C.L."/>
            <person name="Kravitz S."/>
            <person name="Kulp D."/>
            <person name="Lai Z."/>
            <person name="Lasko P."/>
            <person name="Lei Y."/>
            <person name="Levitsky A.A."/>
            <person name="Li J.H."/>
            <person name="Li Z."/>
            <person name="Liang Y."/>
            <person name="Lin X."/>
            <person name="Liu X."/>
            <person name="Mattei B."/>
            <person name="McIntosh T.C."/>
            <person name="McLeod M.P."/>
            <person name="McPherson D."/>
            <person name="Merkulov G."/>
            <person name="Milshina N.V."/>
            <person name="Mobarry C."/>
            <person name="Morris J."/>
            <person name="Moshrefi A."/>
            <person name="Mount S.M."/>
            <person name="Moy M."/>
            <person name="Murphy B."/>
            <person name="Murphy L."/>
            <person name="Muzny D.M."/>
            <person name="Nelson D.L."/>
            <person name="Nelson D.R."/>
            <person name="Nelson K.A."/>
            <person name="Nixon K."/>
            <person name="Nusskern D.R."/>
            <person name="Pacleb J.M."/>
            <person name="Palazzolo M."/>
            <person name="Pittman G.S."/>
            <person name="Pan S."/>
            <person name="Pollard J."/>
            <person name="Puri V."/>
            <person name="Reese M.G."/>
            <person name="Reinert K."/>
            <person name="Remington K."/>
            <person name="Saunders R.D.C."/>
            <person name="Scheeler F."/>
            <person name="Shen H."/>
            <person name="Shue B.C."/>
            <person name="Siden-Kiamos I."/>
            <person name="Simpson M."/>
            <person name="Skupski M.P."/>
            <person name="Smith T.J."/>
            <person name="Spier E."/>
            <person name="Spradling A.C."/>
            <person name="Stapleton M."/>
            <person name="Strong R."/>
            <person name="Sun E."/>
            <person name="Svirskas R."/>
            <person name="Tector C."/>
            <person name="Turner R."/>
            <person name="Venter E."/>
            <person name="Wang A.H."/>
            <person name="Wang X."/>
            <person name="Wang Z.-Y."/>
            <person name="Wassarman D.A."/>
            <person name="Weinstock G.M."/>
            <person name="Weissenbach J."/>
            <person name="Williams S.M."/>
            <person name="Woodage T."/>
            <person name="Worley K.C."/>
            <person name="Wu D."/>
            <person name="Yang S."/>
            <person name="Yao Q.A."/>
            <person name="Ye J."/>
            <person name="Yeh R.-F."/>
            <person name="Zaveri J.S."/>
            <person name="Zhan M."/>
            <person name="Zhang G."/>
            <person name="Zhao Q."/>
            <person name="Zheng L."/>
            <person name="Zheng X.H."/>
            <person name="Zhong F.N."/>
            <person name="Zhong W."/>
            <person name="Zhou X."/>
            <person name="Zhu S.C."/>
            <person name="Zhu X."/>
            <person name="Smith H.O."/>
            <person name="Gibbs R.A."/>
            <person name="Myers E.W."/>
            <person name="Rubin G.M."/>
            <person name="Venter J.C."/>
        </authorList>
    </citation>
    <scope>NUCLEOTIDE SEQUENCE [LARGE SCALE GENOMIC DNA]</scope>
    <source>
        <strain>Berkeley</strain>
    </source>
</reference>
<reference key="2">
    <citation type="journal article" date="2002" name="Genome Biol.">
        <title>Annotation of the Drosophila melanogaster euchromatic genome: a systematic review.</title>
        <authorList>
            <person name="Misra S."/>
            <person name="Crosby M.A."/>
            <person name="Mungall C.J."/>
            <person name="Matthews B.B."/>
            <person name="Campbell K.S."/>
            <person name="Hradecky P."/>
            <person name="Huang Y."/>
            <person name="Kaminker J.S."/>
            <person name="Millburn G.H."/>
            <person name="Prochnik S.E."/>
            <person name="Smith C.D."/>
            <person name="Tupy J.L."/>
            <person name="Whitfield E.J."/>
            <person name="Bayraktaroglu L."/>
            <person name="Berman B.P."/>
            <person name="Bettencourt B.R."/>
            <person name="Celniker S.E."/>
            <person name="de Grey A.D.N.J."/>
            <person name="Drysdale R.A."/>
            <person name="Harris N.L."/>
            <person name="Richter J."/>
            <person name="Russo S."/>
            <person name="Schroeder A.J."/>
            <person name="Shu S.Q."/>
            <person name="Stapleton M."/>
            <person name="Yamada C."/>
            <person name="Ashburner M."/>
            <person name="Gelbart W.M."/>
            <person name="Rubin G.M."/>
            <person name="Lewis S.E."/>
        </authorList>
    </citation>
    <scope>GENOME REANNOTATION</scope>
    <source>
        <strain>Berkeley</strain>
    </source>
</reference>
<organism>
    <name type="scientific">Drosophila melanogaster</name>
    <name type="common">Fruit fly</name>
    <dbReference type="NCBI Taxonomy" id="7227"/>
    <lineage>
        <taxon>Eukaryota</taxon>
        <taxon>Metazoa</taxon>
        <taxon>Ecdysozoa</taxon>
        <taxon>Arthropoda</taxon>
        <taxon>Hexapoda</taxon>
        <taxon>Insecta</taxon>
        <taxon>Pterygota</taxon>
        <taxon>Neoptera</taxon>
        <taxon>Endopterygota</taxon>
        <taxon>Diptera</taxon>
        <taxon>Brachycera</taxon>
        <taxon>Muscomorpha</taxon>
        <taxon>Ephydroidea</taxon>
        <taxon>Drosophilidae</taxon>
        <taxon>Drosophila</taxon>
        <taxon>Sophophora</taxon>
    </lineage>
</organism>
<protein>
    <recommendedName>
        <fullName>Probable cytochrome P450 313a1</fullName>
        <ecNumber>1.14.-.-</ecNumber>
    </recommendedName>
    <alternativeName>
        <fullName>CYPCCCXIIIA1</fullName>
    </alternativeName>
</protein>
<feature type="chain" id="PRO_0000052323" description="Probable cytochrome P450 313a1">
    <location>
        <begin position="1"/>
        <end position="492"/>
    </location>
</feature>
<feature type="binding site" description="axial binding residue" evidence="1">
    <location>
        <position position="438"/>
    </location>
    <ligand>
        <name>heme</name>
        <dbReference type="ChEBI" id="CHEBI:30413"/>
    </ligand>
    <ligandPart>
        <name>Fe</name>
        <dbReference type="ChEBI" id="CHEBI:18248"/>
    </ligandPart>
</feature>
<accession>Q9VFJ0</accession>
<comment type="function">
    <text evidence="1">May be involved in the metabolism of insect hormones and in the breakdown of synthetic insecticides.</text>
</comment>
<comment type="cofactor">
    <cofactor evidence="1">
        <name>heme</name>
        <dbReference type="ChEBI" id="CHEBI:30413"/>
    </cofactor>
</comment>
<comment type="subcellular location">
    <subcellularLocation>
        <location evidence="2">Endoplasmic reticulum membrane</location>
        <topology evidence="2">Peripheral membrane protein</topology>
    </subcellularLocation>
    <subcellularLocation>
        <location evidence="2">Microsome membrane</location>
        <topology evidence="2">Peripheral membrane protein</topology>
    </subcellularLocation>
</comment>
<comment type="similarity">
    <text evidence="2">Belongs to the cytochrome P450 family.</text>
</comment>
<keyword id="KW-0256">Endoplasmic reticulum</keyword>
<keyword id="KW-0349">Heme</keyword>
<keyword id="KW-0408">Iron</keyword>
<keyword id="KW-0472">Membrane</keyword>
<keyword id="KW-0479">Metal-binding</keyword>
<keyword id="KW-0492">Microsome</keyword>
<keyword id="KW-0503">Monooxygenase</keyword>
<keyword id="KW-0560">Oxidoreductase</keyword>
<keyword id="KW-1185">Reference proteome</keyword>